<keyword id="KW-0169">Cobalamin biosynthesis</keyword>
<keyword id="KW-0489">Methyltransferase</keyword>
<keyword id="KW-0949">S-adenosyl-L-methionine</keyword>
<keyword id="KW-0808">Transferase</keyword>
<evidence type="ECO:0000255" key="1">
    <source>
        <dbReference type="HAMAP-Rule" id="MF_00787"/>
    </source>
</evidence>
<name>CBID_BRUME</name>
<feature type="chain" id="PRO_0000141658" description="Cobalt-precorrin-5B C(1)-methyltransferase">
    <location>
        <begin position="1"/>
        <end position="369"/>
    </location>
</feature>
<comment type="function">
    <text evidence="1">Catalyzes the methylation of C-1 in cobalt-precorrin-5B to form cobalt-precorrin-6A.</text>
</comment>
<comment type="catalytic activity">
    <reaction evidence="1">
        <text>Co-precorrin-5B + S-adenosyl-L-methionine = Co-precorrin-6A + S-adenosyl-L-homocysteine</text>
        <dbReference type="Rhea" id="RHEA:26285"/>
        <dbReference type="ChEBI" id="CHEBI:57856"/>
        <dbReference type="ChEBI" id="CHEBI:59789"/>
        <dbReference type="ChEBI" id="CHEBI:60063"/>
        <dbReference type="ChEBI" id="CHEBI:60064"/>
        <dbReference type="EC" id="2.1.1.195"/>
    </reaction>
</comment>
<comment type="pathway">
    <text evidence="1">Cofactor biosynthesis; adenosylcobalamin biosynthesis; cob(II)yrinate a,c-diamide from sirohydrochlorin (anaerobic route): step 6/10.</text>
</comment>
<comment type="similarity">
    <text evidence="1">Belongs to the CbiD family.</text>
</comment>
<accession>Q8YHU3</accession>
<proteinExistence type="inferred from homology"/>
<protein>
    <recommendedName>
        <fullName evidence="1">Cobalt-precorrin-5B C(1)-methyltransferase</fullName>
        <ecNumber evidence="1">2.1.1.195</ecNumber>
    </recommendedName>
    <alternativeName>
        <fullName evidence="1">Cobalt-precorrin-6A synthase</fullName>
    </alternativeName>
</protein>
<gene>
    <name evidence="1" type="primary">cbiD</name>
    <name type="ordered locus">BMEI0703</name>
</gene>
<dbReference type="EC" id="2.1.1.195" evidence="1"/>
<dbReference type="EMBL" id="AE008917">
    <property type="protein sequence ID" value="AAL51884.1"/>
    <property type="molecule type" value="Genomic_DNA"/>
</dbReference>
<dbReference type="PIR" id="AI3339">
    <property type="entry name" value="AI3339"/>
</dbReference>
<dbReference type="RefSeq" id="WP_004683953.1">
    <property type="nucleotide sequence ID" value="NZ_GG703780.1"/>
</dbReference>
<dbReference type="SMR" id="Q8YHU3"/>
<dbReference type="GeneID" id="29593502"/>
<dbReference type="KEGG" id="bme:BMEI0703"/>
<dbReference type="eggNOG" id="COG1903">
    <property type="taxonomic scope" value="Bacteria"/>
</dbReference>
<dbReference type="PhylomeDB" id="Q8YHU3"/>
<dbReference type="UniPathway" id="UPA00148">
    <property type="reaction ID" value="UER00227"/>
</dbReference>
<dbReference type="Proteomes" id="UP000000419">
    <property type="component" value="Chromosome I"/>
</dbReference>
<dbReference type="GO" id="GO:0043780">
    <property type="term" value="F:cobalt-precorrin-5B C1-methyltransferase activity"/>
    <property type="evidence" value="ECO:0007669"/>
    <property type="project" value="RHEA"/>
</dbReference>
<dbReference type="GO" id="GO:0019251">
    <property type="term" value="P:anaerobic cobalamin biosynthetic process"/>
    <property type="evidence" value="ECO:0007669"/>
    <property type="project" value="UniProtKB-UniRule"/>
</dbReference>
<dbReference type="GO" id="GO:0032259">
    <property type="term" value="P:methylation"/>
    <property type="evidence" value="ECO:0007669"/>
    <property type="project" value="UniProtKB-KW"/>
</dbReference>
<dbReference type="Gene3D" id="3.30.2110.10">
    <property type="entry name" value="CbiD-like"/>
    <property type="match status" value="1"/>
</dbReference>
<dbReference type="HAMAP" id="MF_00787">
    <property type="entry name" value="CbiD"/>
    <property type="match status" value="1"/>
</dbReference>
<dbReference type="InterPro" id="IPR002748">
    <property type="entry name" value="CbiD"/>
</dbReference>
<dbReference type="InterPro" id="IPR036074">
    <property type="entry name" value="CbiD_sf"/>
</dbReference>
<dbReference type="NCBIfam" id="TIGR00312">
    <property type="entry name" value="cbiD"/>
    <property type="match status" value="1"/>
</dbReference>
<dbReference type="NCBIfam" id="NF000849">
    <property type="entry name" value="PRK00075.1-1"/>
    <property type="match status" value="1"/>
</dbReference>
<dbReference type="PANTHER" id="PTHR35863">
    <property type="entry name" value="COBALT-PRECORRIN-5B C(1)-METHYLTRANSFERASE"/>
    <property type="match status" value="1"/>
</dbReference>
<dbReference type="PANTHER" id="PTHR35863:SF1">
    <property type="entry name" value="COBALT-PRECORRIN-5B C(1)-METHYLTRANSFERASE"/>
    <property type="match status" value="1"/>
</dbReference>
<dbReference type="Pfam" id="PF01888">
    <property type="entry name" value="CbiD"/>
    <property type="match status" value="1"/>
</dbReference>
<dbReference type="PIRSF" id="PIRSF026782">
    <property type="entry name" value="CbiD"/>
    <property type="match status" value="1"/>
</dbReference>
<dbReference type="SUPFAM" id="SSF111342">
    <property type="entry name" value="CbiD-like"/>
    <property type="match status" value="1"/>
</dbReference>
<reference key="1">
    <citation type="journal article" date="2002" name="Proc. Natl. Acad. Sci. U.S.A.">
        <title>The genome sequence of the facultative intracellular pathogen Brucella melitensis.</title>
        <authorList>
            <person name="DelVecchio V.G."/>
            <person name="Kapatral V."/>
            <person name="Redkar R.J."/>
            <person name="Patra G."/>
            <person name="Mujer C."/>
            <person name="Los T."/>
            <person name="Ivanova N."/>
            <person name="Anderson I."/>
            <person name="Bhattacharyya A."/>
            <person name="Lykidis A."/>
            <person name="Reznik G."/>
            <person name="Jablonski L."/>
            <person name="Larsen N."/>
            <person name="D'Souza M."/>
            <person name="Bernal A."/>
            <person name="Mazur M."/>
            <person name="Goltsman E."/>
            <person name="Selkov E."/>
            <person name="Elzer P.H."/>
            <person name="Hagius S."/>
            <person name="O'Callaghan D."/>
            <person name="Letesson J.-J."/>
            <person name="Haselkorn R."/>
            <person name="Kyrpides N.C."/>
            <person name="Overbeek R."/>
        </authorList>
    </citation>
    <scope>NUCLEOTIDE SEQUENCE [LARGE SCALE GENOMIC DNA]</scope>
    <source>
        <strain>ATCC 23456 / CCUG 17765 / NCTC 10094 / 16M</strain>
    </source>
</reference>
<sequence length="369" mass="38685">MNDETTPANKNPEKAELRCGWTTGACATAATKAALTALITGEFPDPVGIILPKGEVPYFQLAYEGLGEGYAMAGIVKDAGDDPDVTHGATIISTVYPAPPGTGIIFRAGEGVGTVTREGLAIPPPGEAAINPVPRRMMTEICEAICAEYGLPADLVITISVPGGEEIAQKTWNPRLGIIGGISILGTTGVVHPFSCSAWIHSIHRGIDVARAAGQKHVLGATGSTSEDAAQALYNLPDFAILDMGDFAGGVLKYLREHPIDRLTIAGGFAKLTKLAQGALDLHSSRSQVDKGFLWQIAERAGAPADMKERILLANTAMEVLELTQSIGIDIAGPIALEARQTALKTLRGAPVEVEIIVTDRKGNILARV</sequence>
<organism>
    <name type="scientific">Brucella melitensis biotype 1 (strain ATCC 23456 / CCUG 17765 / NCTC 10094 / 16M)</name>
    <dbReference type="NCBI Taxonomy" id="224914"/>
    <lineage>
        <taxon>Bacteria</taxon>
        <taxon>Pseudomonadati</taxon>
        <taxon>Pseudomonadota</taxon>
        <taxon>Alphaproteobacteria</taxon>
        <taxon>Hyphomicrobiales</taxon>
        <taxon>Brucellaceae</taxon>
        <taxon>Brucella/Ochrobactrum group</taxon>
        <taxon>Brucella</taxon>
    </lineage>
</organism>